<accession>Q2V4F4</accession>
<keyword id="KW-0929">Antimicrobial</keyword>
<keyword id="KW-1015">Disulfide bond</keyword>
<keyword id="KW-0295">Fungicide</keyword>
<keyword id="KW-0611">Plant defense</keyword>
<keyword id="KW-1185">Reference proteome</keyword>
<keyword id="KW-0964">Secreted</keyword>
<keyword id="KW-0732">Signal</keyword>
<reference key="1">
    <citation type="journal article" date="2000" name="Nature">
        <title>Sequence and analysis of chromosome 1 of the plant Arabidopsis thaliana.</title>
        <authorList>
            <person name="Theologis A."/>
            <person name="Ecker J.R."/>
            <person name="Palm C.J."/>
            <person name="Federspiel N.A."/>
            <person name="Kaul S."/>
            <person name="White O."/>
            <person name="Alonso J."/>
            <person name="Altafi H."/>
            <person name="Araujo R."/>
            <person name="Bowman C.L."/>
            <person name="Brooks S.Y."/>
            <person name="Buehler E."/>
            <person name="Chan A."/>
            <person name="Chao Q."/>
            <person name="Chen H."/>
            <person name="Cheuk R.F."/>
            <person name="Chin C.W."/>
            <person name="Chung M.K."/>
            <person name="Conn L."/>
            <person name="Conway A.B."/>
            <person name="Conway A.R."/>
            <person name="Creasy T.H."/>
            <person name="Dewar K."/>
            <person name="Dunn P."/>
            <person name="Etgu P."/>
            <person name="Feldblyum T.V."/>
            <person name="Feng J.-D."/>
            <person name="Fong B."/>
            <person name="Fujii C.Y."/>
            <person name="Gill J.E."/>
            <person name="Goldsmith A.D."/>
            <person name="Haas B."/>
            <person name="Hansen N.F."/>
            <person name="Hughes B."/>
            <person name="Huizar L."/>
            <person name="Hunter J.L."/>
            <person name="Jenkins J."/>
            <person name="Johnson-Hopson C."/>
            <person name="Khan S."/>
            <person name="Khaykin E."/>
            <person name="Kim C.J."/>
            <person name="Koo H.L."/>
            <person name="Kremenetskaia I."/>
            <person name="Kurtz D.B."/>
            <person name="Kwan A."/>
            <person name="Lam B."/>
            <person name="Langin-Hooper S."/>
            <person name="Lee A."/>
            <person name="Lee J.M."/>
            <person name="Lenz C.A."/>
            <person name="Li J.H."/>
            <person name="Li Y.-P."/>
            <person name="Lin X."/>
            <person name="Liu S.X."/>
            <person name="Liu Z.A."/>
            <person name="Luros J.S."/>
            <person name="Maiti R."/>
            <person name="Marziali A."/>
            <person name="Militscher J."/>
            <person name="Miranda M."/>
            <person name="Nguyen M."/>
            <person name="Nierman W.C."/>
            <person name="Osborne B.I."/>
            <person name="Pai G."/>
            <person name="Peterson J."/>
            <person name="Pham P.K."/>
            <person name="Rizzo M."/>
            <person name="Rooney T."/>
            <person name="Rowley D."/>
            <person name="Sakano H."/>
            <person name="Salzberg S.L."/>
            <person name="Schwartz J.R."/>
            <person name="Shinn P."/>
            <person name="Southwick A.M."/>
            <person name="Sun H."/>
            <person name="Tallon L.J."/>
            <person name="Tambunga G."/>
            <person name="Toriumi M.J."/>
            <person name="Town C.D."/>
            <person name="Utterback T."/>
            <person name="Van Aken S."/>
            <person name="Vaysberg M."/>
            <person name="Vysotskaia V.S."/>
            <person name="Walker M."/>
            <person name="Wu D."/>
            <person name="Yu G."/>
            <person name="Fraser C.M."/>
            <person name="Venter J.C."/>
            <person name="Davis R.W."/>
        </authorList>
    </citation>
    <scope>NUCLEOTIDE SEQUENCE [LARGE SCALE GENOMIC DNA]</scope>
    <source>
        <strain>cv. Columbia</strain>
    </source>
</reference>
<reference key="2">
    <citation type="journal article" date="2017" name="Plant J.">
        <title>Araport11: a complete reannotation of the Arabidopsis thaliana reference genome.</title>
        <authorList>
            <person name="Cheng C.Y."/>
            <person name="Krishnakumar V."/>
            <person name="Chan A.P."/>
            <person name="Thibaud-Nissen F."/>
            <person name="Schobel S."/>
            <person name="Town C.D."/>
        </authorList>
    </citation>
    <scope>GENOME REANNOTATION</scope>
    <source>
        <strain>cv. Columbia</strain>
    </source>
</reference>
<reference key="3">
    <citation type="journal article" date="2006" name="Plant Biotechnol. J.">
        <title>Simultaneous high-throughput recombinational cloning of open reading frames in closed and open configurations.</title>
        <authorList>
            <person name="Underwood B.A."/>
            <person name="Vanderhaeghen R."/>
            <person name="Whitford R."/>
            <person name="Town C.D."/>
            <person name="Hilson P."/>
        </authorList>
    </citation>
    <scope>NUCLEOTIDE SEQUENCE [LARGE SCALE MRNA]</scope>
    <source>
        <strain>cv. Columbia</strain>
    </source>
</reference>
<reference key="4">
    <citation type="journal article" date="2007" name="Plant J.">
        <title>Small cysteine-rich peptides resembling antimicrobial peptides have been under-predicted in plants.</title>
        <authorList>
            <person name="Silverstein K.A.T."/>
            <person name="Moskal W.A. Jr."/>
            <person name="Wu H.C."/>
            <person name="Underwood B.A."/>
            <person name="Graham M.A."/>
            <person name="Town C.D."/>
            <person name="VandenBosch K.A."/>
        </authorList>
    </citation>
    <scope>NUCLEOTIDE SEQUENCE [LARGE SCALE MRNA]</scope>
    <source>
        <strain>cv. Columbia</strain>
    </source>
</reference>
<reference key="5">
    <citation type="journal article" date="2005" name="Plant Physiol.">
        <title>Genome organization of more than 300 defensin-like genes in Arabidopsis.</title>
        <authorList>
            <person name="Silverstein K.A.T."/>
            <person name="Graham M.A."/>
            <person name="Paape T.D."/>
            <person name="VandenBosch K.A."/>
        </authorList>
    </citation>
    <scope>GENE FAMILY</scope>
</reference>
<protein>
    <recommendedName>
        <fullName>Defensin-like protein 269</fullName>
    </recommendedName>
</protein>
<sequence length="91" mass="10216">MAVSKTTMLIVLVAIILSCVSISNARQMQRPQNVECVGGECQPKHPQQYFGSCFRDSDCRNSCFPYCRYQKCHHHECICSLCSSEVAPSPK</sequence>
<dbReference type="EMBL" id="AC007764">
    <property type="status" value="NOT_ANNOTATED_CDS"/>
    <property type="molecule type" value="Genomic_DNA"/>
</dbReference>
<dbReference type="EMBL" id="CP002684">
    <property type="protein sequence ID" value="AEE34195.1"/>
    <property type="molecule type" value="Genomic_DNA"/>
</dbReference>
<dbReference type="EMBL" id="DQ912210">
    <property type="protein sequence ID" value="ABI34018.1"/>
    <property type="molecule type" value="mRNA"/>
</dbReference>
<dbReference type="EMBL" id="EF182845">
    <property type="status" value="NOT_ANNOTATED_CDS"/>
    <property type="molecule type" value="mRNA"/>
</dbReference>
<dbReference type="RefSeq" id="NP_001031226.1">
    <property type="nucleotide sequence ID" value="NM_001036149.2"/>
</dbReference>
<dbReference type="SMR" id="Q2V4F4"/>
<dbReference type="PaxDb" id="3702-AT1G64107.1"/>
<dbReference type="ProteomicsDB" id="224143"/>
<dbReference type="EnsemblPlants" id="AT1G64107.1">
    <property type="protein sequence ID" value="AT1G64107.1"/>
    <property type="gene ID" value="AT1G64107"/>
</dbReference>
<dbReference type="GeneID" id="3767627"/>
<dbReference type="Gramene" id="AT1G64107.1">
    <property type="protein sequence ID" value="AT1G64107.1"/>
    <property type="gene ID" value="AT1G64107"/>
</dbReference>
<dbReference type="KEGG" id="ath:AT1G64107"/>
<dbReference type="Araport" id="AT1G64107"/>
<dbReference type="TAIR" id="AT1G64107"/>
<dbReference type="HOGENOM" id="CLU_2515794_0_0_1"/>
<dbReference type="InParanoid" id="Q2V4F4"/>
<dbReference type="OMA" id="HHHECIC"/>
<dbReference type="PhylomeDB" id="Q2V4F4"/>
<dbReference type="PRO" id="PR:Q2V4F4"/>
<dbReference type="Proteomes" id="UP000006548">
    <property type="component" value="Chromosome 1"/>
</dbReference>
<dbReference type="ExpressionAtlas" id="Q2V4F4">
    <property type="expression patterns" value="baseline and differential"/>
</dbReference>
<dbReference type="GO" id="GO:0005576">
    <property type="term" value="C:extracellular region"/>
    <property type="evidence" value="ECO:0007669"/>
    <property type="project" value="UniProtKB-SubCell"/>
</dbReference>
<dbReference type="GO" id="GO:0050832">
    <property type="term" value="P:defense response to fungus"/>
    <property type="evidence" value="ECO:0007669"/>
    <property type="project" value="UniProtKB-KW"/>
</dbReference>
<dbReference type="GO" id="GO:0031640">
    <property type="term" value="P:killing of cells of another organism"/>
    <property type="evidence" value="ECO:0007669"/>
    <property type="project" value="UniProtKB-KW"/>
</dbReference>
<proteinExistence type="inferred from homology"/>
<gene>
    <name type="ordered locus">At1g64107</name>
    <name type="ORF">F22C12</name>
</gene>
<name>DF269_ARATH</name>
<comment type="subcellular location">
    <subcellularLocation>
        <location evidence="1">Secreted</location>
    </subcellularLocation>
</comment>
<comment type="similarity">
    <text evidence="3">Belongs to the DEFL family.</text>
</comment>
<evidence type="ECO:0000250" key="1"/>
<evidence type="ECO:0000255" key="2"/>
<evidence type="ECO:0000305" key="3"/>
<feature type="signal peptide" evidence="2">
    <location>
        <begin position="1"/>
        <end position="25"/>
    </location>
</feature>
<feature type="chain" id="PRO_0000379731" description="Defensin-like protein 269">
    <location>
        <begin position="26"/>
        <end position="91"/>
    </location>
</feature>
<feature type="disulfide bond" evidence="1">
    <location>
        <begin position="41"/>
        <end position="82"/>
    </location>
</feature>
<feature type="disulfide bond" evidence="1">
    <location>
        <begin position="53"/>
        <end position="72"/>
    </location>
</feature>
<feature type="disulfide bond" evidence="1">
    <location>
        <begin position="59"/>
        <end position="77"/>
    </location>
</feature>
<feature type="disulfide bond" evidence="1">
    <location>
        <begin position="63"/>
        <end position="79"/>
    </location>
</feature>
<organism>
    <name type="scientific">Arabidopsis thaliana</name>
    <name type="common">Mouse-ear cress</name>
    <dbReference type="NCBI Taxonomy" id="3702"/>
    <lineage>
        <taxon>Eukaryota</taxon>
        <taxon>Viridiplantae</taxon>
        <taxon>Streptophyta</taxon>
        <taxon>Embryophyta</taxon>
        <taxon>Tracheophyta</taxon>
        <taxon>Spermatophyta</taxon>
        <taxon>Magnoliopsida</taxon>
        <taxon>eudicotyledons</taxon>
        <taxon>Gunneridae</taxon>
        <taxon>Pentapetalae</taxon>
        <taxon>rosids</taxon>
        <taxon>malvids</taxon>
        <taxon>Brassicales</taxon>
        <taxon>Brassicaceae</taxon>
        <taxon>Camelineae</taxon>
        <taxon>Arabidopsis</taxon>
    </lineage>
</organism>